<feature type="chain" id="PRO_0000382209" description="Uncharacterized protein YjzJ">
    <location>
        <begin position="1"/>
        <end position="59"/>
    </location>
</feature>
<proteinExistence type="predicted"/>
<protein>
    <recommendedName>
        <fullName>Uncharacterized protein YjzJ</fullName>
    </recommendedName>
</protein>
<keyword id="KW-1185">Reference proteome</keyword>
<name>YJZJ_BACSU</name>
<dbReference type="EMBL" id="AL009126">
    <property type="protein sequence ID" value="CAX52601.1"/>
    <property type="molecule type" value="Genomic_DNA"/>
</dbReference>
<dbReference type="RefSeq" id="WP_003232712.1">
    <property type="nucleotide sequence ID" value="NZ_OZ025638.1"/>
</dbReference>
<dbReference type="RefSeq" id="YP_003097711.1">
    <property type="nucleotide sequence ID" value="NC_000964.3"/>
</dbReference>
<dbReference type="FunCoup" id="C0H3Z4">
    <property type="interactions" value="27"/>
</dbReference>
<dbReference type="STRING" id="224308.BSU12519"/>
<dbReference type="PaxDb" id="224308-BSU12519"/>
<dbReference type="EnsemblBacteria" id="CAX52601">
    <property type="protein sequence ID" value="CAX52601"/>
    <property type="gene ID" value="BSU_12519"/>
</dbReference>
<dbReference type="GeneID" id="8303027"/>
<dbReference type="KEGG" id="bsu:BSU12519"/>
<dbReference type="PATRIC" id="fig|224308.179.peg.1353"/>
<dbReference type="InParanoid" id="C0H3Z4"/>
<dbReference type="OrthoDB" id="2891445at2"/>
<dbReference type="BioCyc" id="BSUB:BSU12519-MONOMER"/>
<dbReference type="Proteomes" id="UP000001570">
    <property type="component" value="Chromosome"/>
</dbReference>
<sequence>MYPIQIVFSENPIDQRHLGQSGGTISFTACGLPVFHFETQEQFQAYMMLKGEAAYNEKR</sequence>
<organism>
    <name type="scientific">Bacillus subtilis (strain 168)</name>
    <dbReference type="NCBI Taxonomy" id="224308"/>
    <lineage>
        <taxon>Bacteria</taxon>
        <taxon>Bacillati</taxon>
        <taxon>Bacillota</taxon>
        <taxon>Bacilli</taxon>
        <taxon>Bacillales</taxon>
        <taxon>Bacillaceae</taxon>
        <taxon>Bacillus</taxon>
    </lineage>
</organism>
<accession>C0H3Z4</accession>
<reference key="1">
    <citation type="journal article" date="1997" name="Nature">
        <title>The complete genome sequence of the Gram-positive bacterium Bacillus subtilis.</title>
        <authorList>
            <person name="Kunst F."/>
            <person name="Ogasawara N."/>
            <person name="Moszer I."/>
            <person name="Albertini A.M."/>
            <person name="Alloni G."/>
            <person name="Azevedo V."/>
            <person name="Bertero M.G."/>
            <person name="Bessieres P."/>
            <person name="Bolotin A."/>
            <person name="Borchert S."/>
            <person name="Borriss R."/>
            <person name="Boursier L."/>
            <person name="Brans A."/>
            <person name="Braun M."/>
            <person name="Brignell S.C."/>
            <person name="Bron S."/>
            <person name="Brouillet S."/>
            <person name="Bruschi C.V."/>
            <person name="Caldwell B."/>
            <person name="Capuano V."/>
            <person name="Carter N.M."/>
            <person name="Choi S.-K."/>
            <person name="Codani J.-J."/>
            <person name="Connerton I.F."/>
            <person name="Cummings N.J."/>
            <person name="Daniel R.A."/>
            <person name="Denizot F."/>
            <person name="Devine K.M."/>
            <person name="Duesterhoeft A."/>
            <person name="Ehrlich S.D."/>
            <person name="Emmerson P.T."/>
            <person name="Entian K.-D."/>
            <person name="Errington J."/>
            <person name="Fabret C."/>
            <person name="Ferrari E."/>
            <person name="Foulger D."/>
            <person name="Fritz C."/>
            <person name="Fujita M."/>
            <person name="Fujita Y."/>
            <person name="Fuma S."/>
            <person name="Galizzi A."/>
            <person name="Galleron N."/>
            <person name="Ghim S.-Y."/>
            <person name="Glaser P."/>
            <person name="Goffeau A."/>
            <person name="Golightly E.J."/>
            <person name="Grandi G."/>
            <person name="Guiseppi G."/>
            <person name="Guy B.J."/>
            <person name="Haga K."/>
            <person name="Haiech J."/>
            <person name="Harwood C.R."/>
            <person name="Henaut A."/>
            <person name="Hilbert H."/>
            <person name="Holsappel S."/>
            <person name="Hosono S."/>
            <person name="Hullo M.-F."/>
            <person name="Itaya M."/>
            <person name="Jones L.-M."/>
            <person name="Joris B."/>
            <person name="Karamata D."/>
            <person name="Kasahara Y."/>
            <person name="Klaerr-Blanchard M."/>
            <person name="Klein C."/>
            <person name="Kobayashi Y."/>
            <person name="Koetter P."/>
            <person name="Koningstein G."/>
            <person name="Krogh S."/>
            <person name="Kumano M."/>
            <person name="Kurita K."/>
            <person name="Lapidus A."/>
            <person name="Lardinois S."/>
            <person name="Lauber J."/>
            <person name="Lazarevic V."/>
            <person name="Lee S.-M."/>
            <person name="Levine A."/>
            <person name="Liu H."/>
            <person name="Masuda S."/>
            <person name="Mauel C."/>
            <person name="Medigue C."/>
            <person name="Medina N."/>
            <person name="Mellado R.P."/>
            <person name="Mizuno M."/>
            <person name="Moestl D."/>
            <person name="Nakai S."/>
            <person name="Noback M."/>
            <person name="Noone D."/>
            <person name="O'Reilly M."/>
            <person name="Ogawa K."/>
            <person name="Ogiwara A."/>
            <person name="Oudega B."/>
            <person name="Park S.-H."/>
            <person name="Parro V."/>
            <person name="Pohl T.M."/>
            <person name="Portetelle D."/>
            <person name="Porwollik S."/>
            <person name="Prescott A.M."/>
            <person name="Presecan E."/>
            <person name="Pujic P."/>
            <person name="Purnelle B."/>
            <person name="Rapoport G."/>
            <person name="Rey M."/>
            <person name="Reynolds S."/>
            <person name="Rieger M."/>
            <person name="Rivolta C."/>
            <person name="Rocha E."/>
            <person name="Roche B."/>
            <person name="Rose M."/>
            <person name="Sadaie Y."/>
            <person name="Sato T."/>
            <person name="Scanlan E."/>
            <person name="Schleich S."/>
            <person name="Schroeter R."/>
            <person name="Scoffone F."/>
            <person name="Sekiguchi J."/>
            <person name="Sekowska A."/>
            <person name="Seror S.J."/>
            <person name="Serror P."/>
            <person name="Shin B.-S."/>
            <person name="Soldo B."/>
            <person name="Sorokin A."/>
            <person name="Tacconi E."/>
            <person name="Takagi T."/>
            <person name="Takahashi H."/>
            <person name="Takemaru K."/>
            <person name="Takeuchi M."/>
            <person name="Tamakoshi A."/>
            <person name="Tanaka T."/>
            <person name="Terpstra P."/>
            <person name="Tognoni A."/>
            <person name="Tosato V."/>
            <person name="Uchiyama S."/>
            <person name="Vandenbol M."/>
            <person name="Vannier F."/>
            <person name="Vassarotti A."/>
            <person name="Viari A."/>
            <person name="Wambutt R."/>
            <person name="Wedler E."/>
            <person name="Wedler H."/>
            <person name="Weitzenegger T."/>
            <person name="Winters P."/>
            <person name="Wipat A."/>
            <person name="Yamamoto H."/>
            <person name="Yamane K."/>
            <person name="Yasumoto K."/>
            <person name="Yata K."/>
            <person name="Yoshida K."/>
            <person name="Yoshikawa H.-F."/>
            <person name="Zumstein E."/>
            <person name="Yoshikawa H."/>
            <person name="Danchin A."/>
        </authorList>
    </citation>
    <scope>NUCLEOTIDE SEQUENCE [LARGE SCALE GENOMIC DNA]</scope>
    <source>
        <strain>168</strain>
    </source>
</reference>
<gene>
    <name type="primary">yjzJ</name>
    <name type="ordered locus">BSU12519</name>
</gene>